<accession>Q8XXQ3</accession>
<proteinExistence type="inferred from homology"/>
<sequence>MTDKLATLQSALEKALGNRIQSLTEAVGEITLVVKAADYLETMRTLRDDATLKFEQLIDLCGVDYSAYGDGAWNGPRFAAVSHLLSVTHNWRVRVRVFAPDDDLPVVASVVDVWNAADWFEREAFDLYGLVFEGHPDLRRILTDYGFIGHPFRKDFPVSGYVEMRYDPVQRRVIYQPVTIEPREITPRVIREDQYGGLKH</sequence>
<reference key="1">
    <citation type="journal article" date="2002" name="Nature">
        <title>Genome sequence of the plant pathogen Ralstonia solanacearum.</title>
        <authorList>
            <person name="Salanoubat M."/>
            <person name="Genin S."/>
            <person name="Artiguenave F."/>
            <person name="Gouzy J."/>
            <person name="Mangenot S."/>
            <person name="Arlat M."/>
            <person name="Billault A."/>
            <person name="Brottier P."/>
            <person name="Camus J.-C."/>
            <person name="Cattolico L."/>
            <person name="Chandler M."/>
            <person name="Choisne N."/>
            <person name="Claudel-Renard C."/>
            <person name="Cunnac S."/>
            <person name="Demange N."/>
            <person name="Gaspin C."/>
            <person name="Lavie M."/>
            <person name="Moisan A."/>
            <person name="Robert C."/>
            <person name="Saurin W."/>
            <person name="Schiex T."/>
            <person name="Siguier P."/>
            <person name="Thebault P."/>
            <person name="Whalen M."/>
            <person name="Wincker P."/>
            <person name="Levy M."/>
            <person name="Weissenbach J."/>
            <person name="Boucher C.A."/>
        </authorList>
    </citation>
    <scope>NUCLEOTIDE SEQUENCE [LARGE SCALE GENOMIC DNA]</scope>
    <source>
        <strain>ATCC BAA-1114 / GMI1000</strain>
    </source>
</reference>
<comment type="function">
    <text evidence="1">NDH-1 shuttles electrons from NADH, via FMN and iron-sulfur (Fe-S) centers, to quinones in the respiratory chain. The immediate electron acceptor for the enzyme in this species is believed to be ubiquinone. Couples the redox reaction to proton translocation (for every two electrons transferred, four hydrogen ions are translocated across the cytoplasmic membrane), and thus conserves the redox energy in a proton gradient.</text>
</comment>
<comment type="catalytic activity">
    <reaction evidence="1">
        <text>a quinone + NADH + 5 H(+)(in) = a quinol + NAD(+) + 4 H(+)(out)</text>
        <dbReference type="Rhea" id="RHEA:57888"/>
        <dbReference type="ChEBI" id="CHEBI:15378"/>
        <dbReference type="ChEBI" id="CHEBI:24646"/>
        <dbReference type="ChEBI" id="CHEBI:57540"/>
        <dbReference type="ChEBI" id="CHEBI:57945"/>
        <dbReference type="ChEBI" id="CHEBI:132124"/>
    </reaction>
</comment>
<comment type="subunit">
    <text evidence="1">NDH-1 is composed of 14 different subunits. Subunits NuoB, C, D, E, F, and G constitute the peripheral sector of the complex.</text>
</comment>
<comment type="subcellular location">
    <subcellularLocation>
        <location evidence="1">Cell inner membrane</location>
        <topology evidence="1">Peripheral membrane protein</topology>
        <orientation evidence="1">Cytoplasmic side</orientation>
    </subcellularLocation>
</comment>
<comment type="similarity">
    <text evidence="1">Belongs to the complex I 30 kDa subunit family.</text>
</comment>
<gene>
    <name evidence="1" type="primary">nuoC</name>
    <name type="ordered locus">RSc2060</name>
</gene>
<dbReference type="EC" id="7.1.1.-" evidence="1"/>
<dbReference type="EMBL" id="AL646052">
    <property type="protein sequence ID" value="CAD15767.1"/>
    <property type="molecule type" value="Genomic_DNA"/>
</dbReference>
<dbReference type="RefSeq" id="WP_011001993.1">
    <property type="nucleotide sequence ID" value="NC_003295.1"/>
</dbReference>
<dbReference type="SMR" id="Q8XXQ3"/>
<dbReference type="STRING" id="267608.RSc2060"/>
<dbReference type="EnsemblBacteria" id="CAD15767">
    <property type="protein sequence ID" value="CAD15767"/>
    <property type="gene ID" value="RSc2060"/>
</dbReference>
<dbReference type="KEGG" id="rso:RSc2060"/>
<dbReference type="eggNOG" id="COG0852">
    <property type="taxonomic scope" value="Bacteria"/>
</dbReference>
<dbReference type="HOGENOM" id="CLU_042628_2_1_4"/>
<dbReference type="Proteomes" id="UP000001436">
    <property type="component" value="Chromosome"/>
</dbReference>
<dbReference type="GO" id="GO:0005886">
    <property type="term" value="C:plasma membrane"/>
    <property type="evidence" value="ECO:0007669"/>
    <property type="project" value="UniProtKB-SubCell"/>
</dbReference>
<dbReference type="GO" id="GO:0008137">
    <property type="term" value="F:NADH dehydrogenase (ubiquinone) activity"/>
    <property type="evidence" value="ECO:0007669"/>
    <property type="project" value="InterPro"/>
</dbReference>
<dbReference type="GO" id="GO:0050136">
    <property type="term" value="F:NADH:ubiquinone reductase (non-electrogenic) activity"/>
    <property type="evidence" value="ECO:0007669"/>
    <property type="project" value="UniProtKB-UniRule"/>
</dbReference>
<dbReference type="GO" id="GO:0048038">
    <property type="term" value="F:quinone binding"/>
    <property type="evidence" value="ECO:0007669"/>
    <property type="project" value="UniProtKB-KW"/>
</dbReference>
<dbReference type="Gene3D" id="3.30.460.80">
    <property type="entry name" value="NADH:ubiquinone oxidoreductase, 30kDa subunit"/>
    <property type="match status" value="1"/>
</dbReference>
<dbReference type="HAMAP" id="MF_01357">
    <property type="entry name" value="NDH1_NuoC"/>
    <property type="match status" value="1"/>
</dbReference>
<dbReference type="InterPro" id="IPR010218">
    <property type="entry name" value="NADH_DH_suC"/>
</dbReference>
<dbReference type="InterPro" id="IPR037232">
    <property type="entry name" value="NADH_quin_OxRdtase_su_C/D-like"/>
</dbReference>
<dbReference type="InterPro" id="IPR001268">
    <property type="entry name" value="NADH_UbQ_OxRdtase_30kDa_su"/>
</dbReference>
<dbReference type="InterPro" id="IPR020396">
    <property type="entry name" value="NADH_UbQ_OxRdtase_CS"/>
</dbReference>
<dbReference type="NCBIfam" id="TIGR01961">
    <property type="entry name" value="NuoC_fam"/>
    <property type="match status" value="1"/>
</dbReference>
<dbReference type="NCBIfam" id="NF004730">
    <property type="entry name" value="PRK06074.1-1"/>
    <property type="match status" value="1"/>
</dbReference>
<dbReference type="PANTHER" id="PTHR10884:SF14">
    <property type="entry name" value="NADH DEHYDROGENASE [UBIQUINONE] IRON-SULFUR PROTEIN 3, MITOCHONDRIAL"/>
    <property type="match status" value="1"/>
</dbReference>
<dbReference type="PANTHER" id="PTHR10884">
    <property type="entry name" value="NADH DEHYDROGENASE UBIQUINONE IRON-SULFUR PROTEIN 3"/>
    <property type="match status" value="1"/>
</dbReference>
<dbReference type="Pfam" id="PF00329">
    <property type="entry name" value="Complex1_30kDa"/>
    <property type="match status" value="1"/>
</dbReference>
<dbReference type="SUPFAM" id="SSF143243">
    <property type="entry name" value="Nqo5-like"/>
    <property type="match status" value="1"/>
</dbReference>
<dbReference type="PROSITE" id="PS00542">
    <property type="entry name" value="COMPLEX1_30K"/>
    <property type="match status" value="1"/>
</dbReference>
<keyword id="KW-0997">Cell inner membrane</keyword>
<keyword id="KW-1003">Cell membrane</keyword>
<keyword id="KW-0472">Membrane</keyword>
<keyword id="KW-0520">NAD</keyword>
<keyword id="KW-0874">Quinone</keyword>
<keyword id="KW-1185">Reference proteome</keyword>
<keyword id="KW-1278">Translocase</keyword>
<keyword id="KW-0813">Transport</keyword>
<keyword id="KW-0830">Ubiquinone</keyword>
<organism>
    <name type="scientific">Ralstonia nicotianae (strain ATCC BAA-1114 / GMI1000)</name>
    <name type="common">Ralstonia solanacearum</name>
    <dbReference type="NCBI Taxonomy" id="267608"/>
    <lineage>
        <taxon>Bacteria</taxon>
        <taxon>Pseudomonadati</taxon>
        <taxon>Pseudomonadota</taxon>
        <taxon>Betaproteobacteria</taxon>
        <taxon>Burkholderiales</taxon>
        <taxon>Burkholderiaceae</taxon>
        <taxon>Ralstonia</taxon>
        <taxon>Ralstonia solanacearum species complex</taxon>
    </lineage>
</organism>
<feature type="chain" id="PRO_0000358177" description="NADH-quinone oxidoreductase subunit C">
    <location>
        <begin position="1"/>
        <end position="200"/>
    </location>
</feature>
<name>NUOC_RALN1</name>
<protein>
    <recommendedName>
        <fullName evidence="1">NADH-quinone oxidoreductase subunit C</fullName>
        <ecNumber evidence="1">7.1.1.-</ecNumber>
    </recommendedName>
    <alternativeName>
        <fullName evidence="1">NADH dehydrogenase I subunit C</fullName>
    </alternativeName>
    <alternativeName>
        <fullName evidence="1">NDH-1 subunit C</fullName>
    </alternativeName>
</protein>
<evidence type="ECO:0000255" key="1">
    <source>
        <dbReference type="HAMAP-Rule" id="MF_01357"/>
    </source>
</evidence>